<dbReference type="EMBL" id="Y11828">
    <property type="protein sequence ID" value="CAA72514.1"/>
    <property type="molecule type" value="Genomic_DNA"/>
</dbReference>
<dbReference type="EMBL" id="AB011476">
    <property type="protein sequence ID" value="BAB09282.1"/>
    <property type="molecule type" value="Genomic_DNA"/>
</dbReference>
<dbReference type="EMBL" id="CP002688">
    <property type="protein sequence ID" value="AED96708.1"/>
    <property type="molecule type" value="Genomic_DNA"/>
</dbReference>
<dbReference type="EMBL" id="AK227254">
    <property type="protein sequence ID" value="BAE99287.1"/>
    <property type="molecule type" value="mRNA"/>
</dbReference>
<dbReference type="PDB" id="6HPG">
    <property type="method" value="X-ray"/>
    <property type="resolution" value="2.00 A"/>
    <property type="chains" value="a/b/c/d/e/f=692-699"/>
</dbReference>
<dbReference type="PDB" id="6Q3Q">
    <property type="method" value="X-ray"/>
    <property type="resolution" value="2.00 A"/>
    <property type="chains" value="a/b=692-699"/>
</dbReference>
<dbReference type="PDBsum" id="6HPG"/>
<dbReference type="PDBsum" id="6Q3Q"/>
<dbReference type="SMR" id="O03986"/>
<dbReference type="BioGRID" id="20942">
    <property type="interactions" value="34"/>
</dbReference>
<dbReference type="FunCoup" id="O03986">
    <property type="interactions" value="3197"/>
</dbReference>
<dbReference type="STRING" id="3702.O03986"/>
<dbReference type="iPTMnet" id="O03986"/>
<dbReference type="MetOSite" id="O03986"/>
<dbReference type="PaxDb" id="3702-AT5G56000.1"/>
<dbReference type="ProteomicsDB" id="230148"/>
<dbReference type="EnsemblPlants" id="AT5G56000.1">
    <property type="protein sequence ID" value="AT5G56000.1"/>
    <property type="gene ID" value="AT5G56000"/>
</dbReference>
<dbReference type="GeneID" id="835698"/>
<dbReference type="Gramene" id="AT5G56000.1">
    <property type="protein sequence ID" value="AT5G56000.1"/>
    <property type="gene ID" value="AT5G56000"/>
</dbReference>
<dbReference type="KEGG" id="ath:AT5G56000"/>
<dbReference type="Araport" id="AT5G56000"/>
<dbReference type="TAIR" id="AT5G56000">
    <property type="gene designation" value="HSP81.4"/>
</dbReference>
<dbReference type="eggNOG" id="KOG0019">
    <property type="taxonomic scope" value="Eukaryota"/>
</dbReference>
<dbReference type="HOGENOM" id="CLU_006684_1_3_1"/>
<dbReference type="InParanoid" id="O03986"/>
<dbReference type="OMA" id="CHENVIY"/>
<dbReference type="PhylomeDB" id="O03986"/>
<dbReference type="CD-CODE" id="4299E36E">
    <property type="entry name" value="Nucleolus"/>
</dbReference>
<dbReference type="PRO" id="PR:O03986"/>
<dbReference type="Proteomes" id="UP000006548">
    <property type="component" value="Chromosome 5"/>
</dbReference>
<dbReference type="ExpressionAtlas" id="O03986">
    <property type="expression patterns" value="baseline and differential"/>
</dbReference>
<dbReference type="GO" id="GO:0048046">
    <property type="term" value="C:apoplast"/>
    <property type="evidence" value="ECO:0007005"/>
    <property type="project" value="TAIR"/>
</dbReference>
<dbReference type="GO" id="GO:0009570">
    <property type="term" value="C:chloroplast stroma"/>
    <property type="evidence" value="ECO:0007005"/>
    <property type="project" value="TAIR"/>
</dbReference>
<dbReference type="GO" id="GO:0005794">
    <property type="term" value="C:Golgi apparatus"/>
    <property type="evidence" value="ECO:0007005"/>
    <property type="project" value="TAIR"/>
</dbReference>
<dbReference type="GO" id="GO:0009505">
    <property type="term" value="C:plant-type cell wall"/>
    <property type="evidence" value="ECO:0007005"/>
    <property type="project" value="TAIR"/>
</dbReference>
<dbReference type="GO" id="GO:0000325">
    <property type="term" value="C:plant-type vacuole"/>
    <property type="evidence" value="ECO:0007005"/>
    <property type="project" value="TAIR"/>
</dbReference>
<dbReference type="GO" id="GO:0009536">
    <property type="term" value="C:plastid"/>
    <property type="evidence" value="ECO:0007005"/>
    <property type="project" value="TAIR"/>
</dbReference>
<dbReference type="GO" id="GO:0005524">
    <property type="term" value="F:ATP binding"/>
    <property type="evidence" value="ECO:0007669"/>
    <property type="project" value="UniProtKB-KW"/>
</dbReference>
<dbReference type="GO" id="GO:0016887">
    <property type="term" value="F:ATP hydrolysis activity"/>
    <property type="evidence" value="ECO:0007669"/>
    <property type="project" value="InterPro"/>
</dbReference>
<dbReference type="GO" id="GO:0140662">
    <property type="term" value="F:ATP-dependent protein folding chaperone"/>
    <property type="evidence" value="ECO:0007669"/>
    <property type="project" value="InterPro"/>
</dbReference>
<dbReference type="GO" id="GO:0003729">
    <property type="term" value="F:mRNA binding"/>
    <property type="evidence" value="ECO:0000314"/>
    <property type="project" value="TAIR"/>
</dbReference>
<dbReference type="GO" id="GO:0051082">
    <property type="term" value="F:unfolded protein binding"/>
    <property type="evidence" value="ECO:0007669"/>
    <property type="project" value="InterPro"/>
</dbReference>
<dbReference type="CDD" id="cd16927">
    <property type="entry name" value="HATPase_Hsp90-like"/>
    <property type="match status" value="1"/>
</dbReference>
<dbReference type="FunFam" id="3.30.565.10:FF:000012">
    <property type="entry name" value="Heat shock cognate protein"/>
    <property type="match status" value="1"/>
</dbReference>
<dbReference type="FunFam" id="1.20.120.790:FF:000001">
    <property type="entry name" value="Heat shock protein 90 alpha"/>
    <property type="match status" value="1"/>
</dbReference>
<dbReference type="FunFam" id="3.30.230.80:FF:000001">
    <property type="entry name" value="Heat shock protein 90 alpha"/>
    <property type="match status" value="1"/>
</dbReference>
<dbReference type="FunFam" id="3.40.50.11260:FF:000001">
    <property type="entry name" value="Heat shock protein 90 alpha"/>
    <property type="match status" value="1"/>
</dbReference>
<dbReference type="Gene3D" id="3.30.230.80">
    <property type="match status" value="1"/>
</dbReference>
<dbReference type="Gene3D" id="3.40.50.11260">
    <property type="match status" value="1"/>
</dbReference>
<dbReference type="Gene3D" id="1.20.120.790">
    <property type="entry name" value="Heat shock protein 90, C-terminal domain"/>
    <property type="match status" value="1"/>
</dbReference>
<dbReference type="Gene3D" id="3.30.565.10">
    <property type="entry name" value="Histidine kinase-like ATPase, C-terminal domain"/>
    <property type="match status" value="1"/>
</dbReference>
<dbReference type="HAMAP" id="MF_00505">
    <property type="entry name" value="HSP90"/>
    <property type="match status" value="1"/>
</dbReference>
<dbReference type="InterPro" id="IPR036890">
    <property type="entry name" value="HATPase_C_sf"/>
</dbReference>
<dbReference type="InterPro" id="IPR019805">
    <property type="entry name" value="Heat_shock_protein_90_CS"/>
</dbReference>
<dbReference type="InterPro" id="IPR037196">
    <property type="entry name" value="HSP90_C"/>
</dbReference>
<dbReference type="InterPro" id="IPR001404">
    <property type="entry name" value="Hsp90_fam"/>
</dbReference>
<dbReference type="InterPro" id="IPR020575">
    <property type="entry name" value="Hsp90_N"/>
</dbReference>
<dbReference type="InterPro" id="IPR020568">
    <property type="entry name" value="Ribosomal_Su5_D2-typ_SF"/>
</dbReference>
<dbReference type="NCBIfam" id="NF003555">
    <property type="entry name" value="PRK05218.1"/>
    <property type="match status" value="1"/>
</dbReference>
<dbReference type="PANTHER" id="PTHR11528">
    <property type="entry name" value="HEAT SHOCK PROTEIN 90 FAMILY MEMBER"/>
    <property type="match status" value="1"/>
</dbReference>
<dbReference type="Pfam" id="PF13589">
    <property type="entry name" value="HATPase_c_3"/>
    <property type="match status" value="1"/>
</dbReference>
<dbReference type="Pfam" id="PF00183">
    <property type="entry name" value="HSP90"/>
    <property type="match status" value="1"/>
</dbReference>
<dbReference type="PIRSF" id="PIRSF002583">
    <property type="entry name" value="Hsp90"/>
    <property type="match status" value="1"/>
</dbReference>
<dbReference type="PRINTS" id="PR00775">
    <property type="entry name" value="HEATSHOCK90"/>
</dbReference>
<dbReference type="SMART" id="SM00387">
    <property type="entry name" value="HATPase_c"/>
    <property type="match status" value="1"/>
</dbReference>
<dbReference type="SUPFAM" id="SSF55874">
    <property type="entry name" value="ATPase domain of HSP90 chaperone/DNA topoisomerase II/histidine kinase"/>
    <property type="match status" value="1"/>
</dbReference>
<dbReference type="SUPFAM" id="SSF110942">
    <property type="entry name" value="HSP90 C-terminal domain"/>
    <property type="match status" value="1"/>
</dbReference>
<dbReference type="SUPFAM" id="SSF54211">
    <property type="entry name" value="Ribosomal protein S5 domain 2-like"/>
    <property type="match status" value="1"/>
</dbReference>
<dbReference type="PROSITE" id="PS00298">
    <property type="entry name" value="HSP90"/>
    <property type="match status" value="1"/>
</dbReference>
<sequence>MADAETFAFQAEINQLLSLIINTFYSNKEIFLRELISNSSDALDKIRFESLTDKSKLDGQPELFIHIIPDKTNNTLTIIDSGIGMTKADLVNNLGTIARSGTKEFMEALAAGADVSMIGQFGVGFYSAYLVADKVVVTTKHNDDEQYVWESQAGGSFTVTRDTSGEALGRGTKMILYLKEDQMEYIEERRLKDLVKKHSEFISYPISLWIEKTIEKEISDDEEEEEKKDEEGKVEEIDEEKEKEEKKKKKIKEVTHEWDLVNKQKPIWMRKPEEINKEEYAAFYKSLSNDWEEHLAVKHFSVEGQLEFKAILFVPKRAPFDLFDTKKKPNNIKLYVRRVFIMDNCEDIIPDYLGFVKGIVDSEDLPLNISRETLQQNKILKVIRKNLVKKCLELFFEIAENKEDYNKFYEAFSKNLKLGIHEDSQNRTKIAELLRYHSTKSGDELTSLKDYVTRMKEGQNEIFYITGESKKAVENSPFLEKLKKKGYEVLYMVDAIDEYAIGQLKEFEGKKLVSATKEGLKLEETDDEKKKKEELKEKFEGLCKVIKDVLGDKVEKVIVSDRVVDSPCCLVTGEYGWTANMERIMKAQALKDSNTGGYMSSKKTMEINPENSIMDELRKRAEADKNDKSVKDLVLLLFETALLTSGFSLDEPNTFGSRIHRMLKLGLSIEEDDAVEADAEMPPLEDDADAEGSKMEEVD</sequence>
<keyword id="KW-0002">3D-structure</keyword>
<keyword id="KW-0067">ATP-binding</keyword>
<keyword id="KW-0143">Chaperone</keyword>
<keyword id="KW-0963">Cytoplasm</keyword>
<keyword id="KW-0547">Nucleotide-binding</keyword>
<keyword id="KW-0597">Phosphoprotein</keyword>
<keyword id="KW-1185">Reference proteome</keyword>
<keyword id="KW-0346">Stress response</keyword>
<evidence type="ECO:0000250" key="1"/>
<evidence type="ECO:0000250" key="2">
    <source>
        <dbReference type="UniProtKB" id="P02829"/>
    </source>
</evidence>
<evidence type="ECO:0000250" key="3">
    <source>
        <dbReference type="UniProtKB" id="P27323"/>
    </source>
</evidence>
<evidence type="ECO:0000256" key="4">
    <source>
        <dbReference type="SAM" id="MobiDB-lite"/>
    </source>
</evidence>
<evidence type="ECO:0000269" key="5">
    <source>
    </source>
</evidence>
<evidence type="ECO:0000303" key="6">
    <source>
    </source>
</evidence>
<evidence type="ECO:0000305" key="7"/>
<comment type="function">
    <text evidence="3">Molecular chaperone which stabilizes unfolding protein intermediates and functions as a folding molecular chaperone that assists the non-covalent folding of proteins in an ATP-dependent manner.</text>
</comment>
<comment type="subunit">
    <text evidence="5">Homodimer. Interacts with OEP61, OEP64 and OM64.</text>
</comment>
<comment type="subcellular location">
    <subcellularLocation>
        <location evidence="7">Cytoplasm</location>
    </subcellularLocation>
</comment>
<comment type="domain">
    <text evidence="1">The TPR repeat-binding motif mediates interaction with TPR repeat-containing proteins.</text>
</comment>
<comment type="similarity">
    <text evidence="7">Belongs to the heat shock protein 90 family.</text>
</comment>
<gene>
    <name evidence="6" type="primary">HSP90-4</name>
    <name evidence="6" type="synonym">HSP81-4</name>
    <name type="ordered locus">At5g56000</name>
    <name type="ORF">MDA7.4</name>
</gene>
<reference key="1">
    <citation type="journal article" date="1997" name="Plant Mol. Biol.">
        <title>Genomic organization of hsp90 gene family in Arabidopsis.</title>
        <authorList>
            <person name="Milioni D."/>
            <person name="Hatzopoulos P."/>
        </authorList>
    </citation>
    <scope>NUCLEOTIDE SEQUENCE [MRNA]</scope>
    <source>
        <strain>cv. Landsberg erecta</strain>
    </source>
</reference>
<reference key="2">
    <citation type="journal article" date="1998" name="DNA Res.">
        <title>Structural analysis of Arabidopsis thaliana chromosome 5. V. Sequence features of the regions of 1,381,565 bp covered by twenty one physically assigned P1 and TAC clones.</title>
        <authorList>
            <person name="Kaneko T."/>
            <person name="Kotani H."/>
            <person name="Nakamura Y."/>
            <person name="Sato S."/>
            <person name="Asamizu E."/>
            <person name="Miyajima N."/>
            <person name="Tabata S."/>
        </authorList>
    </citation>
    <scope>NUCLEOTIDE SEQUENCE [LARGE SCALE GENOMIC DNA]</scope>
    <source>
        <strain>cv. Columbia</strain>
    </source>
</reference>
<reference key="3">
    <citation type="journal article" date="2017" name="Plant J.">
        <title>Araport11: a complete reannotation of the Arabidopsis thaliana reference genome.</title>
        <authorList>
            <person name="Cheng C.Y."/>
            <person name="Krishnakumar V."/>
            <person name="Chan A.P."/>
            <person name="Thibaud-Nissen F."/>
            <person name="Schobel S."/>
            <person name="Town C.D."/>
        </authorList>
    </citation>
    <scope>GENOME REANNOTATION</scope>
    <source>
        <strain>cv. Columbia</strain>
    </source>
</reference>
<reference key="4">
    <citation type="submission" date="2006-07" db="EMBL/GenBank/DDBJ databases">
        <title>Large-scale analysis of RIKEN Arabidopsis full-length (RAFL) cDNAs.</title>
        <authorList>
            <person name="Totoki Y."/>
            <person name="Seki M."/>
            <person name="Ishida J."/>
            <person name="Nakajima M."/>
            <person name="Enju A."/>
            <person name="Kamiya A."/>
            <person name="Narusaka M."/>
            <person name="Shin-i T."/>
            <person name="Nakagawa M."/>
            <person name="Sakamoto N."/>
            <person name="Oishi K."/>
            <person name="Kohara Y."/>
            <person name="Kobayashi M."/>
            <person name="Toyoda A."/>
            <person name="Sakaki Y."/>
            <person name="Sakurai T."/>
            <person name="Iida K."/>
            <person name="Akiyama K."/>
            <person name="Satou M."/>
            <person name="Toyoda T."/>
            <person name="Konagaya A."/>
            <person name="Carninci P."/>
            <person name="Kawai J."/>
            <person name="Hayashizaki Y."/>
            <person name="Shinozaki K."/>
        </authorList>
    </citation>
    <scope>NUCLEOTIDE SEQUENCE [LARGE SCALE MRNA]</scope>
    <source>
        <strain>cv. Columbia</strain>
    </source>
</reference>
<reference key="5">
    <citation type="journal article" date="2001" name="Cell Stress Chaperones">
        <title>The Hsp90 family of proteins in Arabidopsis thaliana.</title>
        <authorList>
            <person name="Krishna P."/>
            <person name="Gloor G."/>
        </authorList>
    </citation>
    <scope>GENE FAMILY</scope>
    <scope>NOMENCLATURE</scope>
</reference>
<reference key="6">
    <citation type="journal article" date="2013" name="J. Biol. Chem.">
        <title>Quantification of interaction strengths between chaperones and tetratricopeptide repeat domain-containing membrane proteins.</title>
        <authorList>
            <person name="Schweiger R."/>
            <person name="Soll J."/>
            <person name="Jung K."/>
            <person name="Heermann R."/>
            <person name="Schwenkert S."/>
        </authorList>
    </citation>
    <scope>HOMODIMERIZATION</scope>
    <scope>INTERACTION WITH OEP61; OEP64 AND OM64</scope>
</reference>
<proteinExistence type="evidence at protein level"/>
<feature type="chain" id="PRO_0000403651" description="Heat shock protein 90-4">
    <location>
        <begin position="1"/>
        <end position="699"/>
    </location>
</feature>
<feature type="region of interest" description="Disordered" evidence="4">
    <location>
        <begin position="219"/>
        <end position="248"/>
    </location>
</feature>
<feature type="region of interest" description="Disordered" evidence="4">
    <location>
        <begin position="673"/>
        <end position="699"/>
    </location>
</feature>
<feature type="short sequence motif" description="TPR repeat-binding">
    <location>
        <begin position="695"/>
        <end position="699"/>
    </location>
</feature>
<feature type="compositionally biased region" description="Acidic residues" evidence="4">
    <location>
        <begin position="219"/>
        <end position="228"/>
    </location>
</feature>
<feature type="compositionally biased region" description="Acidic residues" evidence="4">
    <location>
        <begin position="673"/>
        <end position="690"/>
    </location>
</feature>
<feature type="binding site" evidence="2">
    <location>
        <position position="34"/>
    </location>
    <ligand>
        <name>ATP</name>
        <dbReference type="ChEBI" id="CHEBI:30616"/>
    </ligand>
</feature>
<feature type="binding site" evidence="2">
    <location>
        <position position="38"/>
    </location>
    <ligand>
        <name>ATP</name>
        <dbReference type="ChEBI" id="CHEBI:30616"/>
    </ligand>
</feature>
<feature type="binding site" evidence="2">
    <location>
        <position position="80"/>
    </location>
    <ligand>
        <name>ATP</name>
        <dbReference type="ChEBI" id="CHEBI:30616"/>
    </ligand>
</feature>
<feature type="binding site" evidence="2">
    <location>
        <position position="85"/>
    </location>
    <ligand>
        <name>ATP</name>
        <dbReference type="ChEBI" id="CHEBI:30616"/>
    </ligand>
</feature>
<feature type="binding site" evidence="2">
    <location>
        <position position="93"/>
    </location>
    <ligand>
        <name>ATP</name>
        <dbReference type="ChEBI" id="CHEBI:30616"/>
    </ligand>
</feature>
<feature type="binding site" evidence="2">
    <location>
        <position position="99"/>
    </location>
    <ligand>
        <name>ATP</name>
        <dbReference type="ChEBI" id="CHEBI:30616"/>
    </ligand>
</feature>
<feature type="binding site" evidence="2">
    <location>
        <begin position="100"/>
        <end position="101"/>
    </location>
    <ligand>
        <name>ATP</name>
        <dbReference type="ChEBI" id="CHEBI:30616"/>
    </ligand>
</feature>
<feature type="binding site" evidence="2">
    <location>
        <begin position="120"/>
        <end position="125"/>
    </location>
    <ligand>
        <name>ATP</name>
        <dbReference type="ChEBI" id="CHEBI:30616"/>
    </ligand>
</feature>
<feature type="binding site" evidence="2">
    <location>
        <position position="172"/>
    </location>
    <ligand>
        <name>ATP</name>
        <dbReference type="ChEBI" id="CHEBI:30616"/>
    </ligand>
</feature>
<feature type="binding site" evidence="2">
    <location>
        <position position="371"/>
    </location>
    <ligand>
        <name>ATP</name>
        <dbReference type="ChEBI" id="CHEBI:30616"/>
    </ligand>
</feature>
<feature type="modified residue" description="Phosphoserine" evidence="3">
    <location>
        <position position="219"/>
    </location>
</feature>
<name>HS904_ARATH</name>
<organism>
    <name type="scientific">Arabidopsis thaliana</name>
    <name type="common">Mouse-ear cress</name>
    <dbReference type="NCBI Taxonomy" id="3702"/>
    <lineage>
        <taxon>Eukaryota</taxon>
        <taxon>Viridiplantae</taxon>
        <taxon>Streptophyta</taxon>
        <taxon>Embryophyta</taxon>
        <taxon>Tracheophyta</taxon>
        <taxon>Spermatophyta</taxon>
        <taxon>Magnoliopsida</taxon>
        <taxon>eudicotyledons</taxon>
        <taxon>Gunneridae</taxon>
        <taxon>Pentapetalae</taxon>
        <taxon>rosids</taxon>
        <taxon>malvids</taxon>
        <taxon>Brassicales</taxon>
        <taxon>Brassicaceae</taxon>
        <taxon>Camelineae</taxon>
        <taxon>Arabidopsis</taxon>
    </lineage>
</organism>
<protein>
    <recommendedName>
        <fullName evidence="7">Heat shock protein 90-4</fullName>
        <shortName evidence="7">AtHSP90.4</shortName>
        <shortName evidence="6">AtHsp90-4</shortName>
    </recommendedName>
    <alternativeName>
        <fullName evidence="7">Heat shock protein 81-4</fullName>
        <shortName evidence="6">Hsp81-4</shortName>
    </alternativeName>
</protein>
<accession>O03986</accession>